<sequence>MQAYFDQLDRVRYEGPQSTNPLAFRHYNPDELVLGKRMEDHLRFAACYWHTFCWNGADMFGVGAFNRPWQQPGEALELAKRKADVAFEFFHKLNVPFYCFHDVDVSPEGASLKEYKNNFAQMVDVLAAKQEQSGVKLLWGTANCFTNPRYGAGAATNPDPEVFSWAATQVVTAMNATHKLGGENYVLWGGREGYETLLNTDLRQEREQIGRFMQMVVEHKHKMGFQGTLLIEPKPQEPTKHQYDYDVATVYGFLKQFGLEKEIKVNIEANHATLAGHSFHHEIATAIALGIFGSVDANRGDAQLGWDTDQFPISVEENALVMYEILKAGGFTTGGLNFDAKVRRQSTDKYDLFYGHIGAMDTMALSLKIAARMVEDGELDKRVAKRYAGWNGELGQQILKGQLSLGELAQYAEQHNLAPVHQSGHQELLENLVNRYLFDK</sequence>
<comment type="catalytic activity">
    <reaction evidence="1">
        <text>alpha-D-xylose = alpha-D-xylulofuranose</text>
        <dbReference type="Rhea" id="RHEA:22816"/>
        <dbReference type="ChEBI" id="CHEBI:28518"/>
        <dbReference type="ChEBI" id="CHEBI:188998"/>
        <dbReference type="EC" id="5.3.1.5"/>
    </reaction>
</comment>
<comment type="cofactor">
    <cofactor evidence="1">
        <name>Mg(2+)</name>
        <dbReference type="ChEBI" id="CHEBI:18420"/>
    </cofactor>
    <text evidence="1">Binds 2 magnesium ions per subunit.</text>
</comment>
<comment type="subunit">
    <text evidence="1">Homotetramer.</text>
</comment>
<comment type="subcellular location">
    <subcellularLocation>
        <location evidence="1">Cytoplasm</location>
    </subcellularLocation>
</comment>
<comment type="similarity">
    <text evidence="1">Belongs to the xylose isomerase family.</text>
</comment>
<name>XYLA_SALNS</name>
<accession>B4SWK9</accession>
<keyword id="KW-0119">Carbohydrate metabolism</keyword>
<keyword id="KW-0963">Cytoplasm</keyword>
<keyword id="KW-0413">Isomerase</keyword>
<keyword id="KW-0460">Magnesium</keyword>
<keyword id="KW-0479">Metal-binding</keyword>
<keyword id="KW-0859">Xylose metabolism</keyword>
<protein>
    <recommendedName>
        <fullName evidence="1">Xylose isomerase</fullName>
        <ecNumber evidence="1">5.3.1.5</ecNumber>
    </recommendedName>
</protein>
<gene>
    <name evidence="1" type="primary">xylA</name>
    <name type="ordered locus">SNSL254_A3939</name>
</gene>
<dbReference type="EC" id="5.3.1.5" evidence="1"/>
<dbReference type="EMBL" id="CP001113">
    <property type="protein sequence ID" value="ACF63708.1"/>
    <property type="molecule type" value="Genomic_DNA"/>
</dbReference>
<dbReference type="RefSeq" id="WP_001149561.1">
    <property type="nucleotide sequence ID" value="NZ_CCMR01000004.1"/>
</dbReference>
<dbReference type="SMR" id="B4SWK9"/>
<dbReference type="KEGG" id="see:SNSL254_A3939"/>
<dbReference type="HOGENOM" id="CLU_037261_1_0_6"/>
<dbReference type="Proteomes" id="UP000008824">
    <property type="component" value="Chromosome"/>
</dbReference>
<dbReference type="GO" id="GO:0005737">
    <property type="term" value="C:cytoplasm"/>
    <property type="evidence" value="ECO:0007669"/>
    <property type="project" value="UniProtKB-SubCell"/>
</dbReference>
<dbReference type="GO" id="GO:0000287">
    <property type="term" value="F:magnesium ion binding"/>
    <property type="evidence" value="ECO:0007669"/>
    <property type="project" value="UniProtKB-UniRule"/>
</dbReference>
<dbReference type="GO" id="GO:0009045">
    <property type="term" value="F:xylose isomerase activity"/>
    <property type="evidence" value="ECO:0007669"/>
    <property type="project" value="UniProtKB-UniRule"/>
</dbReference>
<dbReference type="GO" id="GO:0042732">
    <property type="term" value="P:D-xylose metabolic process"/>
    <property type="evidence" value="ECO:0007669"/>
    <property type="project" value="UniProtKB-UniRule"/>
</dbReference>
<dbReference type="FunFam" id="3.20.20.150:FF:000002">
    <property type="entry name" value="Xylose isomerase"/>
    <property type="match status" value="1"/>
</dbReference>
<dbReference type="Gene3D" id="3.20.20.150">
    <property type="entry name" value="Divalent-metal-dependent TIM barrel enzymes"/>
    <property type="match status" value="1"/>
</dbReference>
<dbReference type="HAMAP" id="MF_00455">
    <property type="entry name" value="Xylose_isom_A"/>
    <property type="match status" value="1"/>
</dbReference>
<dbReference type="InterPro" id="IPR036237">
    <property type="entry name" value="Xyl_isomerase-like_sf"/>
</dbReference>
<dbReference type="InterPro" id="IPR013452">
    <property type="entry name" value="Xylose_isom_bac"/>
</dbReference>
<dbReference type="InterPro" id="IPR001998">
    <property type="entry name" value="Xylose_isomerase"/>
</dbReference>
<dbReference type="NCBIfam" id="NF003998">
    <property type="entry name" value="PRK05474.1"/>
    <property type="match status" value="1"/>
</dbReference>
<dbReference type="NCBIfam" id="TIGR02630">
    <property type="entry name" value="xylose_isom_A"/>
    <property type="match status" value="1"/>
</dbReference>
<dbReference type="PANTHER" id="PTHR48408">
    <property type="match status" value="1"/>
</dbReference>
<dbReference type="PANTHER" id="PTHR48408:SF1">
    <property type="entry name" value="XYLOSE ISOMERASE"/>
    <property type="match status" value="1"/>
</dbReference>
<dbReference type="PRINTS" id="PR00688">
    <property type="entry name" value="XYLOSISMRASE"/>
</dbReference>
<dbReference type="SUPFAM" id="SSF51658">
    <property type="entry name" value="Xylose isomerase-like"/>
    <property type="match status" value="1"/>
</dbReference>
<dbReference type="PROSITE" id="PS51415">
    <property type="entry name" value="XYLOSE_ISOMERASE"/>
    <property type="match status" value="1"/>
</dbReference>
<proteinExistence type="inferred from homology"/>
<evidence type="ECO:0000255" key="1">
    <source>
        <dbReference type="HAMAP-Rule" id="MF_00455"/>
    </source>
</evidence>
<reference key="1">
    <citation type="journal article" date="2011" name="J. Bacteriol.">
        <title>Comparative genomics of 28 Salmonella enterica isolates: evidence for CRISPR-mediated adaptive sublineage evolution.</title>
        <authorList>
            <person name="Fricke W.F."/>
            <person name="Mammel M.K."/>
            <person name="McDermott P.F."/>
            <person name="Tartera C."/>
            <person name="White D.G."/>
            <person name="Leclerc J.E."/>
            <person name="Ravel J."/>
            <person name="Cebula T.A."/>
        </authorList>
    </citation>
    <scope>NUCLEOTIDE SEQUENCE [LARGE SCALE GENOMIC DNA]</scope>
    <source>
        <strain>SL254</strain>
    </source>
</reference>
<feature type="chain" id="PRO_1000200308" description="Xylose isomerase">
    <location>
        <begin position="1"/>
        <end position="440"/>
    </location>
</feature>
<feature type="active site" evidence="1">
    <location>
        <position position="101"/>
    </location>
</feature>
<feature type="active site" evidence="1">
    <location>
        <position position="104"/>
    </location>
</feature>
<feature type="binding site" evidence="1">
    <location>
        <position position="232"/>
    </location>
    <ligand>
        <name>Mg(2+)</name>
        <dbReference type="ChEBI" id="CHEBI:18420"/>
        <label>1</label>
    </ligand>
</feature>
<feature type="binding site" evidence="1">
    <location>
        <position position="268"/>
    </location>
    <ligand>
        <name>Mg(2+)</name>
        <dbReference type="ChEBI" id="CHEBI:18420"/>
        <label>1</label>
    </ligand>
</feature>
<feature type="binding site" evidence="1">
    <location>
        <position position="268"/>
    </location>
    <ligand>
        <name>Mg(2+)</name>
        <dbReference type="ChEBI" id="CHEBI:18420"/>
        <label>2</label>
    </ligand>
</feature>
<feature type="binding site" evidence="1">
    <location>
        <position position="271"/>
    </location>
    <ligand>
        <name>Mg(2+)</name>
        <dbReference type="ChEBI" id="CHEBI:18420"/>
        <label>2</label>
    </ligand>
</feature>
<feature type="binding site" evidence="1">
    <location>
        <position position="296"/>
    </location>
    <ligand>
        <name>Mg(2+)</name>
        <dbReference type="ChEBI" id="CHEBI:18420"/>
        <label>1</label>
    </ligand>
</feature>
<feature type="binding site" evidence="1">
    <location>
        <position position="307"/>
    </location>
    <ligand>
        <name>Mg(2+)</name>
        <dbReference type="ChEBI" id="CHEBI:18420"/>
        <label>2</label>
    </ligand>
</feature>
<feature type="binding site" evidence="1">
    <location>
        <position position="309"/>
    </location>
    <ligand>
        <name>Mg(2+)</name>
        <dbReference type="ChEBI" id="CHEBI:18420"/>
        <label>2</label>
    </ligand>
</feature>
<feature type="binding site" evidence="1">
    <location>
        <position position="339"/>
    </location>
    <ligand>
        <name>Mg(2+)</name>
        <dbReference type="ChEBI" id="CHEBI:18420"/>
        <label>1</label>
    </ligand>
</feature>
<organism>
    <name type="scientific">Salmonella newport (strain SL254)</name>
    <dbReference type="NCBI Taxonomy" id="423368"/>
    <lineage>
        <taxon>Bacteria</taxon>
        <taxon>Pseudomonadati</taxon>
        <taxon>Pseudomonadota</taxon>
        <taxon>Gammaproteobacteria</taxon>
        <taxon>Enterobacterales</taxon>
        <taxon>Enterobacteriaceae</taxon>
        <taxon>Salmonella</taxon>
    </lineage>
</organism>